<comment type="function">
    <text evidence="1">Modifies the topological state of DNA by introducing positive supercoils in an ATP-dependent process, increasing the linking number in steps of +1. Binds to single-stranded DNA, transiently cleaves and then rejoins the ends, introducing a positive supercoil in the process. The scissile phosphodiester is attacked by the catalytic tyrosine of the enzyme, resulting in the formation of a DNA-(5'-phosphotyrosyl)-enzyme intermediate. Probably involved in rewinding DNA strands in regions of the chromosome that have opened up to allow replication, transcription, DNA repair and/or for DNA protection.</text>
</comment>
<comment type="catalytic activity">
    <reaction evidence="1">
        <text>ATP + H2O = ADP + phosphate + H(+)</text>
        <dbReference type="Rhea" id="RHEA:13065"/>
        <dbReference type="ChEBI" id="CHEBI:15377"/>
        <dbReference type="ChEBI" id="CHEBI:15378"/>
        <dbReference type="ChEBI" id="CHEBI:30616"/>
        <dbReference type="ChEBI" id="CHEBI:43474"/>
        <dbReference type="ChEBI" id="CHEBI:456216"/>
    </reaction>
</comment>
<comment type="cofactor">
    <cofactor evidence="1">
        <name>Zn(2+)</name>
        <dbReference type="ChEBI" id="CHEBI:29105"/>
    </cofactor>
    <text evidence="1">Binds 2 zinc ions per subunit.</text>
</comment>
<comment type="cofactor">
    <cofactor evidence="1">
        <name>Mg(2+)</name>
        <dbReference type="ChEBI" id="CHEBI:18420"/>
    </cofactor>
</comment>
<comment type="subunit">
    <text evidence="1">Monomer.</text>
</comment>
<comment type="subcellular location">
    <subcellularLocation>
        <location evidence="1">Cytoplasm</location>
    </subcellularLocation>
</comment>
<comment type="domain">
    <text evidence="1">Introduction of positive supercoils requires the cooperation of both domains. The helicase-like domain probably does not directly unwind DNA, but more likely acts by driving ATP-dependent conformational changes within the whole enzyme. A beta hairpin in the 'latch' region of the N-terminal domain plays a regulatory role in the enzyme, repressing topoisomerase activity in the absence of ATP and preventing the enzyme from acting as an ATP-independent relaxing enzyme; it also helps to coordinate nucleotide hydrolysis by the ATPase domain with the supercoiling activity of the topoisomerase domain.</text>
</comment>
<comment type="miscellaneous">
    <text evidence="1">This enzyme is the only unique feature of hyperthermophilic bacteria/archaea known and seems to be essential for adaptation to life at high temperatures. It may play a role in stabilization of DNA at high temperatures.</text>
</comment>
<comment type="similarity">
    <text evidence="1">In the N-terminal section; belongs to the DEAD box helicase family. DDVD subfamily.</text>
</comment>
<comment type="similarity">
    <text evidence="1">In the C-terminal section; belongs to the type IA topoisomerase family.</text>
</comment>
<name>RGYR2_AERPE</name>
<keyword id="KW-0067">ATP-binding</keyword>
<keyword id="KW-0963">Cytoplasm</keyword>
<keyword id="KW-0238">DNA-binding</keyword>
<keyword id="KW-0413">Isomerase</keyword>
<keyword id="KW-0460">Magnesium</keyword>
<keyword id="KW-0479">Metal-binding</keyword>
<keyword id="KW-0547">Nucleotide-binding</keyword>
<keyword id="KW-1185">Reference proteome</keyword>
<keyword id="KW-0677">Repeat</keyword>
<keyword id="KW-0799">Topoisomerase</keyword>
<keyword id="KW-0862">Zinc</keyword>
<keyword id="KW-0863">Zinc-finger</keyword>
<proteinExistence type="inferred from homology"/>
<evidence type="ECO:0000255" key="1">
    <source>
        <dbReference type="HAMAP-Rule" id="MF_01125"/>
    </source>
</evidence>
<evidence type="ECO:0000255" key="2">
    <source>
        <dbReference type="PROSITE-ProRule" id="PRU01380"/>
    </source>
</evidence>
<evidence type="ECO:0000255" key="3">
    <source>
        <dbReference type="PROSITE-ProRule" id="PRU01381"/>
    </source>
</evidence>
<evidence type="ECO:0000255" key="4">
    <source>
        <dbReference type="PROSITE-ProRule" id="PRU01383"/>
    </source>
</evidence>
<dbReference type="EC" id="5.6.2.-" evidence="1"/>
<dbReference type="EMBL" id="BA000002">
    <property type="protein sequence ID" value="BAA80373.2"/>
    <property type="molecule type" value="Genomic_DNA"/>
</dbReference>
<dbReference type="PIR" id="G72614">
    <property type="entry name" value="G72614"/>
</dbReference>
<dbReference type="RefSeq" id="WP_010866333.1">
    <property type="nucleotide sequence ID" value="NC_000854.2"/>
</dbReference>
<dbReference type="SMR" id="Q9YC75"/>
<dbReference type="STRING" id="272557.APE_1376.1"/>
<dbReference type="EnsemblBacteria" id="BAA80373">
    <property type="protein sequence ID" value="BAA80373"/>
    <property type="gene ID" value="APE_1376.1"/>
</dbReference>
<dbReference type="GeneID" id="1445977"/>
<dbReference type="KEGG" id="ape:APE_1376.1"/>
<dbReference type="PATRIC" id="fig|272557.25.peg.936"/>
<dbReference type="eggNOG" id="arCOG01526">
    <property type="taxonomic scope" value="Archaea"/>
</dbReference>
<dbReference type="Proteomes" id="UP000002518">
    <property type="component" value="Chromosome"/>
</dbReference>
<dbReference type="GO" id="GO:0005737">
    <property type="term" value="C:cytoplasm"/>
    <property type="evidence" value="ECO:0007669"/>
    <property type="project" value="UniProtKB-SubCell"/>
</dbReference>
<dbReference type="GO" id="GO:0005524">
    <property type="term" value="F:ATP binding"/>
    <property type="evidence" value="ECO:0007669"/>
    <property type="project" value="UniProtKB-UniRule"/>
</dbReference>
<dbReference type="GO" id="GO:0016887">
    <property type="term" value="F:ATP hydrolysis activity"/>
    <property type="evidence" value="ECO:0007669"/>
    <property type="project" value="InterPro"/>
</dbReference>
<dbReference type="GO" id="GO:0003677">
    <property type="term" value="F:DNA binding"/>
    <property type="evidence" value="ECO:0007669"/>
    <property type="project" value="UniProtKB-UniRule"/>
</dbReference>
<dbReference type="GO" id="GO:0003918">
    <property type="term" value="F:DNA topoisomerase type II (double strand cut, ATP-hydrolyzing) activity"/>
    <property type="evidence" value="ECO:0007669"/>
    <property type="project" value="UniProtKB-EC"/>
</dbReference>
<dbReference type="GO" id="GO:0160097">
    <property type="term" value="F:reverse gyrase activity"/>
    <property type="evidence" value="ECO:0007669"/>
    <property type="project" value="UniProtKB-UniRule"/>
</dbReference>
<dbReference type="GO" id="GO:0008270">
    <property type="term" value="F:zinc ion binding"/>
    <property type="evidence" value="ECO:0007669"/>
    <property type="project" value="UniProtKB-UniRule"/>
</dbReference>
<dbReference type="GO" id="GO:0006265">
    <property type="term" value="P:DNA topological change"/>
    <property type="evidence" value="ECO:0007669"/>
    <property type="project" value="UniProtKB-UniRule"/>
</dbReference>
<dbReference type="CDD" id="cd17924">
    <property type="entry name" value="DDXDc_reverse_gyrase"/>
    <property type="match status" value="1"/>
</dbReference>
<dbReference type="CDD" id="cd18798">
    <property type="entry name" value="SF2_C_reverse_gyrase"/>
    <property type="match status" value="1"/>
</dbReference>
<dbReference type="CDD" id="cd00186">
    <property type="entry name" value="TOP1Ac"/>
    <property type="match status" value="1"/>
</dbReference>
<dbReference type="CDD" id="cd03361">
    <property type="entry name" value="TOPRIM_TopoIA_RevGyr"/>
    <property type="match status" value="1"/>
</dbReference>
<dbReference type="Gene3D" id="2.60.510.20">
    <property type="match status" value="1"/>
</dbReference>
<dbReference type="Gene3D" id="3.40.50.140">
    <property type="match status" value="1"/>
</dbReference>
<dbReference type="Gene3D" id="3.40.50.300">
    <property type="entry name" value="P-loop containing nucleotide triphosphate hydrolases"/>
    <property type="match status" value="3"/>
</dbReference>
<dbReference type="Gene3D" id="1.10.460.10">
    <property type="entry name" value="Topoisomerase I, domain 2"/>
    <property type="match status" value="1"/>
</dbReference>
<dbReference type="Gene3D" id="1.10.290.10">
    <property type="entry name" value="Topoisomerase I, domain 4"/>
    <property type="match status" value="1"/>
</dbReference>
<dbReference type="HAMAP" id="MF_01125">
    <property type="entry name" value="Reverse_gyrase"/>
    <property type="match status" value="1"/>
</dbReference>
<dbReference type="InterPro" id="IPR003593">
    <property type="entry name" value="AAA+_ATPase"/>
</dbReference>
<dbReference type="InterPro" id="IPR011545">
    <property type="entry name" value="DEAD/DEAH_box_helicase_dom"/>
</dbReference>
<dbReference type="InterPro" id="IPR014001">
    <property type="entry name" value="Helicase_ATP-bd"/>
</dbReference>
<dbReference type="InterPro" id="IPR027417">
    <property type="entry name" value="P-loop_NTPase"/>
</dbReference>
<dbReference type="InterPro" id="IPR005736">
    <property type="entry name" value="Reverse_gyrase"/>
</dbReference>
<dbReference type="InterPro" id="IPR003601">
    <property type="entry name" value="Topo_IA_2"/>
</dbReference>
<dbReference type="InterPro" id="IPR013497">
    <property type="entry name" value="Topo_IA_cen"/>
</dbReference>
<dbReference type="InterPro" id="IPR013824">
    <property type="entry name" value="Topo_IA_cen_sub1"/>
</dbReference>
<dbReference type="InterPro" id="IPR013826">
    <property type="entry name" value="Topo_IA_cen_sub3"/>
</dbReference>
<dbReference type="InterPro" id="IPR023405">
    <property type="entry name" value="Topo_IA_core_domain"/>
</dbReference>
<dbReference type="InterPro" id="IPR003602">
    <property type="entry name" value="Topo_IA_DNA-bd_dom"/>
</dbReference>
<dbReference type="InterPro" id="IPR006171">
    <property type="entry name" value="TOPRIM_dom"/>
</dbReference>
<dbReference type="InterPro" id="IPR034142">
    <property type="entry name" value="TOPRIM_RevGyr"/>
</dbReference>
<dbReference type="InterPro" id="IPR040569">
    <property type="entry name" value="Znf_Rg"/>
</dbReference>
<dbReference type="NCBIfam" id="TIGR01054">
    <property type="entry name" value="rgy"/>
    <property type="match status" value="1"/>
</dbReference>
<dbReference type="PANTHER" id="PTHR43505">
    <property type="entry name" value="REVERSE GYRASE"/>
    <property type="match status" value="1"/>
</dbReference>
<dbReference type="PANTHER" id="PTHR43505:SF1">
    <property type="entry name" value="REVERSE GYRASE"/>
    <property type="match status" value="1"/>
</dbReference>
<dbReference type="Pfam" id="PF00270">
    <property type="entry name" value="DEAD"/>
    <property type="match status" value="1"/>
</dbReference>
<dbReference type="Pfam" id="PF01131">
    <property type="entry name" value="Topoisom_bac"/>
    <property type="match status" value="1"/>
</dbReference>
<dbReference type="Pfam" id="PF01751">
    <property type="entry name" value="Toprim"/>
    <property type="match status" value="1"/>
</dbReference>
<dbReference type="Pfam" id="PF17915">
    <property type="entry name" value="zf_Rg"/>
    <property type="match status" value="1"/>
</dbReference>
<dbReference type="PRINTS" id="PR00417">
    <property type="entry name" value="PRTPISMRASEI"/>
</dbReference>
<dbReference type="SMART" id="SM00382">
    <property type="entry name" value="AAA"/>
    <property type="match status" value="1"/>
</dbReference>
<dbReference type="SMART" id="SM00487">
    <property type="entry name" value="DEXDc"/>
    <property type="match status" value="1"/>
</dbReference>
<dbReference type="SMART" id="SM00437">
    <property type="entry name" value="TOP1Ac"/>
    <property type="match status" value="1"/>
</dbReference>
<dbReference type="SMART" id="SM00436">
    <property type="entry name" value="TOP1Bc"/>
    <property type="match status" value="1"/>
</dbReference>
<dbReference type="SMART" id="SM00493">
    <property type="entry name" value="TOPRIM"/>
    <property type="match status" value="1"/>
</dbReference>
<dbReference type="SUPFAM" id="SSF52540">
    <property type="entry name" value="P-loop containing nucleoside triphosphate hydrolases"/>
    <property type="match status" value="2"/>
</dbReference>
<dbReference type="SUPFAM" id="SSF56712">
    <property type="entry name" value="Prokaryotic type I DNA topoisomerase"/>
    <property type="match status" value="1"/>
</dbReference>
<dbReference type="PROSITE" id="PS51192">
    <property type="entry name" value="HELICASE_ATP_BIND_1"/>
    <property type="match status" value="1"/>
</dbReference>
<dbReference type="PROSITE" id="PS52039">
    <property type="entry name" value="TOPO_IA_2"/>
    <property type="match status" value="1"/>
</dbReference>
<dbReference type="PROSITE" id="PS50880">
    <property type="entry name" value="TOPRIM"/>
    <property type="match status" value="1"/>
</dbReference>
<dbReference type="PROSITE" id="PS52037">
    <property type="entry name" value="ZF_RG_C"/>
    <property type="match status" value="1"/>
</dbReference>
<dbReference type="PROSITE" id="PS52036">
    <property type="entry name" value="ZF_RG_N"/>
    <property type="match status" value="1"/>
</dbReference>
<protein>
    <recommendedName>
        <fullName evidence="1">Reverse gyrase 2</fullName>
        <ecNumber evidence="1">5.6.2.-</ecNumber>
    </recommendedName>
</protein>
<feature type="chain" id="PRO_0000158085" description="Reverse gyrase 2">
    <location>
        <begin position="1"/>
        <end position="1215"/>
    </location>
</feature>
<feature type="domain" description="Helicase ATP-binding" evidence="1">
    <location>
        <begin position="93"/>
        <end position="249"/>
    </location>
</feature>
<feature type="domain" description="Toprim" evidence="1">
    <location>
        <begin position="618"/>
        <end position="783"/>
    </location>
</feature>
<feature type="domain" description="Topo IA-type catalytic" evidence="4">
    <location>
        <begin position="799"/>
        <end position="1200"/>
    </location>
</feature>
<feature type="zinc finger region" description="RG N-terminal-type" evidence="2">
    <location>
        <begin position="3"/>
        <end position="44"/>
    </location>
</feature>
<feature type="zinc finger region" description="RG C-terminal-type" evidence="3">
    <location>
        <begin position="702"/>
        <end position="729"/>
    </location>
</feature>
<feature type="region of interest" description="Topoisomerase I" evidence="1">
    <location>
        <begin position="614"/>
        <end position="1215"/>
    </location>
</feature>
<feature type="short sequence motif" description="DEAD box" evidence="1">
    <location>
        <begin position="209"/>
        <end position="212"/>
    </location>
</feature>
<feature type="active site" description="O-(5'-phospho-DNA)-tyrosine intermediate" evidence="4">
    <location>
        <position position="943"/>
    </location>
</feature>
<feature type="binding site" evidence="1">
    <location>
        <position position="13"/>
    </location>
    <ligand>
        <name>Zn(2+)</name>
        <dbReference type="ChEBI" id="CHEBI:29105"/>
        <label>1</label>
    </ligand>
</feature>
<feature type="binding site" evidence="1">
    <location>
        <position position="16"/>
    </location>
    <ligand>
        <name>Zn(2+)</name>
        <dbReference type="ChEBI" id="CHEBI:29105"/>
        <label>1</label>
    </ligand>
</feature>
<feature type="binding site" evidence="1">
    <location>
        <position position="31"/>
    </location>
    <ligand>
        <name>Zn(2+)</name>
        <dbReference type="ChEBI" id="CHEBI:29105"/>
        <label>1</label>
    </ligand>
</feature>
<feature type="binding site" evidence="1">
    <location>
        <position position="34"/>
    </location>
    <ligand>
        <name>Zn(2+)</name>
        <dbReference type="ChEBI" id="CHEBI:29105"/>
        <label>1</label>
    </ligand>
</feature>
<feature type="binding site" evidence="1">
    <location>
        <position position="89"/>
    </location>
    <ligand>
        <name>ATP</name>
        <dbReference type="ChEBI" id="CHEBI:30616"/>
    </ligand>
</feature>
<feature type="binding site" evidence="1">
    <location>
        <begin position="106"/>
        <end position="113"/>
    </location>
    <ligand>
        <name>ATP</name>
        <dbReference type="ChEBI" id="CHEBI:30616"/>
    </ligand>
</feature>
<feature type="binding site" evidence="1">
    <location>
        <position position="624"/>
    </location>
    <ligand>
        <name>Mg(2+)</name>
        <dbReference type="ChEBI" id="CHEBI:18420"/>
        <note>catalytic</note>
    </ligand>
</feature>
<feature type="binding site" evidence="1">
    <location>
        <position position="705"/>
    </location>
    <ligand>
        <name>Zn(2+)</name>
        <dbReference type="ChEBI" id="CHEBI:29105"/>
        <label>2</label>
    </ligand>
</feature>
<feature type="binding site" evidence="1">
    <location>
        <position position="708"/>
    </location>
    <ligand>
        <name>Zn(2+)</name>
        <dbReference type="ChEBI" id="CHEBI:29105"/>
        <label>2</label>
    </ligand>
</feature>
<feature type="binding site" evidence="1">
    <location>
        <position position="719"/>
    </location>
    <ligand>
        <name>Zn(2+)</name>
        <dbReference type="ChEBI" id="CHEBI:29105"/>
        <label>2</label>
    </ligand>
</feature>
<feature type="binding site" evidence="1">
    <location>
        <position position="722"/>
    </location>
    <ligand>
        <name>Zn(2+)</name>
        <dbReference type="ChEBI" id="CHEBI:29105"/>
        <label>2</label>
    </ligand>
</feature>
<feature type="binding site" evidence="1">
    <location>
        <position position="752"/>
    </location>
    <ligand>
        <name>Mg(2+)</name>
        <dbReference type="ChEBI" id="CHEBI:18420"/>
        <note>catalytic</note>
    </ligand>
</feature>
<accession>Q9YC75</accession>
<gene>
    <name evidence="1" type="primary">rgy2</name>
    <name type="ordered locus">APE_1376.1</name>
</gene>
<organism>
    <name type="scientific">Aeropyrum pernix (strain ATCC 700893 / DSM 11879 / JCM 9820 / NBRC 100138 / K1)</name>
    <dbReference type="NCBI Taxonomy" id="272557"/>
    <lineage>
        <taxon>Archaea</taxon>
        <taxon>Thermoproteota</taxon>
        <taxon>Thermoprotei</taxon>
        <taxon>Desulfurococcales</taxon>
        <taxon>Desulfurococcaceae</taxon>
        <taxon>Aeropyrum</taxon>
    </lineage>
</organism>
<sequence>MPGGVNAVYMGLCYNCGGNIDEDRLEKGLPCARCLPSPPRRATPLTVYRALKKAGTLGAYSWEYLSIREVERFEAYFAAKSGSRLWSAQRSWAKRLVKGDSFAIIAPTGVGKSTLLTVYAAYVAAVKRGRVLYLVPTENLVRQVYAKLDQVEPGIATAYYSRMPAKARESSLEKIASGGARLIVATTGFLSRRFDLLHPQYKFDLAIVDDVDSLLRNSRNVERILLLTGFSEETVEAAHSLVKARLKLYRALHSGASESIVSRLEQEIAQLEARLRLSLSEASPGQLVIASATGRPRGVKHLLFKELLGFEVGGGSDYLRNIVDAYVVDSDPVGRTAEIVSALGDGVIVFVSQRLGKDVARAIAGRLEGMGVSTALALTGARRPVEAFARGEARVLIGMASRYGVIVRGLDLPERSKYAVFLGAPSAKTHLLEALYSPRRMLAFLSIAQEKGVEWAGEAFRRLSRLLEKVIDTSIVSLAARGKLEAQGPAGEAAGIISETAPRLVDWLVAEARLQGGLLRVGGLVVDARGPIPYLVVPDAPTYIQASGRVSRLYRGVMTRGLSIVVDEAPEYVEALGERLKWTTSSRLRPLSEVDMEKLRREIEESRRGKGRRVRVKTTLLVVESPTKARTIAWFWGRPGKRRIGRSVIYEASVSDPETGDVHILQITSTRGHLTDLTTDSVGSKYGVDEDGGGYRAYYSTIKRCLDCGAQHTSSSPFCPRCGSPRQVDSKSVVEILRKLASEVDEIVIATDPDREGEKIAWDVFLAVRPYNPNVRRGRFHEVTPRAVIEALRSGESVEKSLIEAQKVRRIVDRWIGFHLSTHLKLKFSKPWLGAGRVQTPVLGWIVDRYREWQDTRGYLVIFKLSSGGRTSYFTQNRLEVENLKRVEWLEVVDIAGKTEERNPPPPYTTDEYLYDASRKLGLSAGLAMKIAQDLFESGLITYHRTDSTRVSPTGVKLALEYLASRGLEGEAQPRGWGEGGAHEAIRPVRPIDAQDLERAVLSGSIRIPIRLTRLHIRVYDMIFRRFIASQMKPATLDIVEATLQAGETVFNHAGVARVRGGYALVNPPRVEEWLARLSPGDRIDVEDVLVVKSSLKRLYRAGDIVKMMREHGIGRPSTYAKAIEQNRRHGYVIESKKMRYLIPTKTGVSIYDYLSNGFKKLVSVDTTRRLEEALERVEKGVEKPEAVLASVWRMVDEAVSLHAATGDVMGQSEA</sequence>
<reference key="1">
    <citation type="journal article" date="1999" name="DNA Res.">
        <title>Complete genome sequence of an aerobic hyper-thermophilic crenarchaeon, Aeropyrum pernix K1.</title>
        <authorList>
            <person name="Kawarabayasi Y."/>
            <person name="Hino Y."/>
            <person name="Horikawa H."/>
            <person name="Yamazaki S."/>
            <person name="Haikawa Y."/>
            <person name="Jin-no K."/>
            <person name="Takahashi M."/>
            <person name="Sekine M."/>
            <person name="Baba S."/>
            <person name="Ankai A."/>
            <person name="Kosugi H."/>
            <person name="Hosoyama A."/>
            <person name="Fukui S."/>
            <person name="Nagai Y."/>
            <person name="Nishijima K."/>
            <person name="Nakazawa H."/>
            <person name="Takamiya M."/>
            <person name="Masuda S."/>
            <person name="Funahashi T."/>
            <person name="Tanaka T."/>
            <person name="Kudoh Y."/>
            <person name="Yamazaki J."/>
            <person name="Kushida N."/>
            <person name="Oguchi A."/>
            <person name="Aoki K."/>
            <person name="Kubota K."/>
            <person name="Nakamura Y."/>
            <person name="Nomura N."/>
            <person name="Sako Y."/>
            <person name="Kikuchi H."/>
        </authorList>
    </citation>
    <scope>NUCLEOTIDE SEQUENCE [LARGE SCALE GENOMIC DNA]</scope>
    <source>
        <strain>ATCC 700893 / DSM 11879 / JCM 9820 / NBRC 100138 / K1</strain>
    </source>
</reference>